<organism>
    <name type="scientific">Synechococcus sp. (strain RCC307)</name>
    <dbReference type="NCBI Taxonomy" id="316278"/>
    <lineage>
        <taxon>Bacteria</taxon>
        <taxon>Bacillati</taxon>
        <taxon>Cyanobacteriota</taxon>
        <taxon>Cyanophyceae</taxon>
        <taxon>Synechococcales</taxon>
        <taxon>Synechococcaceae</taxon>
        <taxon>Synechococcus</taxon>
    </lineage>
</organism>
<sequence length="305" mass="32203">MEIPADLNLRKDVPLGDFTTWKVGGAADFFAEPDSSDHLEALVHWGRGQQLPMRFIGAGSNLLISDEGLAGLVICSRRLQGSQLDPTTGIIEAQAGEPLPTLARRAAKAGLSGLEWSVGIPGTVGGAVVMNAGAQGGCIAESLIDATVLDPSSGQTRRMSCNELDYDYRHSALQSEALVVLSARFRLQAGVDPSELSARTSSNLHKRTSTQPYQLPSCGSVFRNPEPQKAGRLIEGLGLKGHRIGGAEVSTLHANFIVNTGNAQAADMDALIRHVQAVVKQAHGLQLHPEVMRLGCFANSQAAAA</sequence>
<proteinExistence type="inferred from homology"/>
<gene>
    <name evidence="1" type="primary">murB</name>
    <name type="ordered locus">SynRCC307_0026</name>
</gene>
<protein>
    <recommendedName>
        <fullName evidence="1">UDP-N-acetylenolpyruvoylglucosamine reductase</fullName>
        <ecNumber evidence="1">1.3.1.98</ecNumber>
    </recommendedName>
    <alternativeName>
        <fullName evidence="1">UDP-N-acetylmuramate dehydrogenase</fullName>
    </alternativeName>
</protein>
<name>MURB_SYNR3</name>
<dbReference type="EC" id="1.3.1.98" evidence="1"/>
<dbReference type="EMBL" id="CT978603">
    <property type="protein sequence ID" value="CAK26929.1"/>
    <property type="molecule type" value="Genomic_DNA"/>
</dbReference>
<dbReference type="SMR" id="A5GPX0"/>
<dbReference type="STRING" id="316278.SynRCC307_0026"/>
<dbReference type="KEGG" id="syr:SynRCC307_0026"/>
<dbReference type="eggNOG" id="COG0812">
    <property type="taxonomic scope" value="Bacteria"/>
</dbReference>
<dbReference type="HOGENOM" id="CLU_035304_1_1_3"/>
<dbReference type="OrthoDB" id="9804753at2"/>
<dbReference type="UniPathway" id="UPA00219"/>
<dbReference type="Proteomes" id="UP000001115">
    <property type="component" value="Chromosome"/>
</dbReference>
<dbReference type="GO" id="GO:0005829">
    <property type="term" value="C:cytosol"/>
    <property type="evidence" value="ECO:0007669"/>
    <property type="project" value="TreeGrafter"/>
</dbReference>
<dbReference type="GO" id="GO:0071949">
    <property type="term" value="F:FAD binding"/>
    <property type="evidence" value="ECO:0007669"/>
    <property type="project" value="InterPro"/>
</dbReference>
<dbReference type="GO" id="GO:0008762">
    <property type="term" value="F:UDP-N-acetylmuramate dehydrogenase activity"/>
    <property type="evidence" value="ECO:0007669"/>
    <property type="project" value="UniProtKB-UniRule"/>
</dbReference>
<dbReference type="GO" id="GO:0051301">
    <property type="term" value="P:cell division"/>
    <property type="evidence" value="ECO:0007669"/>
    <property type="project" value="UniProtKB-KW"/>
</dbReference>
<dbReference type="GO" id="GO:0071555">
    <property type="term" value="P:cell wall organization"/>
    <property type="evidence" value="ECO:0007669"/>
    <property type="project" value="UniProtKB-KW"/>
</dbReference>
<dbReference type="GO" id="GO:0009252">
    <property type="term" value="P:peptidoglycan biosynthetic process"/>
    <property type="evidence" value="ECO:0007669"/>
    <property type="project" value="UniProtKB-UniRule"/>
</dbReference>
<dbReference type="GO" id="GO:0008360">
    <property type="term" value="P:regulation of cell shape"/>
    <property type="evidence" value="ECO:0007669"/>
    <property type="project" value="UniProtKB-KW"/>
</dbReference>
<dbReference type="Gene3D" id="3.30.465.10">
    <property type="match status" value="1"/>
</dbReference>
<dbReference type="Gene3D" id="3.90.78.10">
    <property type="entry name" value="UDP-N-acetylenolpyruvoylglucosamine reductase, C-terminal domain"/>
    <property type="match status" value="1"/>
</dbReference>
<dbReference type="Gene3D" id="3.30.43.10">
    <property type="entry name" value="Uridine Diphospho-n-acetylenolpyruvylglucosamine Reductase, domain 2"/>
    <property type="match status" value="1"/>
</dbReference>
<dbReference type="HAMAP" id="MF_00037">
    <property type="entry name" value="MurB"/>
    <property type="match status" value="1"/>
</dbReference>
<dbReference type="InterPro" id="IPR016166">
    <property type="entry name" value="FAD-bd_PCMH"/>
</dbReference>
<dbReference type="InterPro" id="IPR036318">
    <property type="entry name" value="FAD-bd_PCMH-like_sf"/>
</dbReference>
<dbReference type="InterPro" id="IPR016167">
    <property type="entry name" value="FAD-bd_PCMH_sub1"/>
</dbReference>
<dbReference type="InterPro" id="IPR016169">
    <property type="entry name" value="FAD-bd_PCMH_sub2"/>
</dbReference>
<dbReference type="InterPro" id="IPR003170">
    <property type="entry name" value="MurB"/>
</dbReference>
<dbReference type="InterPro" id="IPR011601">
    <property type="entry name" value="MurB_C"/>
</dbReference>
<dbReference type="InterPro" id="IPR036635">
    <property type="entry name" value="MurB_C_sf"/>
</dbReference>
<dbReference type="InterPro" id="IPR006094">
    <property type="entry name" value="Oxid_FAD_bind_N"/>
</dbReference>
<dbReference type="NCBIfam" id="TIGR00179">
    <property type="entry name" value="murB"/>
    <property type="match status" value="1"/>
</dbReference>
<dbReference type="NCBIfam" id="NF010480">
    <property type="entry name" value="PRK13905.1"/>
    <property type="match status" value="1"/>
</dbReference>
<dbReference type="PANTHER" id="PTHR21071">
    <property type="entry name" value="UDP-N-ACETYLENOLPYRUVOYLGLUCOSAMINE REDUCTASE"/>
    <property type="match status" value="1"/>
</dbReference>
<dbReference type="PANTHER" id="PTHR21071:SF4">
    <property type="entry name" value="UDP-N-ACETYLENOLPYRUVOYLGLUCOSAMINE REDUCTASE"/>
    <property type="match status" value="1"/>
</dbReference>
<dbReference type="Pfam" id="PF01565">
    <property type="entry name" value="FAD_binding_4"/>
    <property type="match status" value="1"/>
</dbReference>
<dbReference type="Pfam" id="PF02873">
    <property type="entry name" value="MurB_C"/>
    <property type="match status" value="1"/>
</dbReference>
<dbReference type="SUPFAM" id="SSF56176">
    <property type="entry name" value="FAD-binding/transporter-associated domain-like"/>
    <property type="match status" value="1"/>
</dbReference>
<dbReference type="SUPFAM" id="SSF56194">
    <property type="entry name" value="Uridine diphospho-N-Acetylenolpyruvylglucosamine reductase, MurB, C-terminal domain"/>
    <property type="match status" value="1"/>
</dbReference>
<dbReference type="PROSITE" id="PS51387">
    <property type="entry name" value="FAD_PCMH"/>
    <property type="match status" value="1"/>
</dbReference>
<reference key="1">
    <citation type="submission" date="2006-05" db="EMBL/GenBank/DDBJ databases">
        <authorList>
            <consortium name="Genoscope"/>
        </authorList>
    </citation>
    <scope>NUCLEOTIDE SEQUENCE [LARGE SCALE GENOMIC DNA]</scope>
    <source>
        <strain>RCC307</strain>
    </source>
</reference>
<comment type="function">
    <text evidence="1">Cell wall formation.</text>
</comment>
<comment type="catalytic activity">
    <reaction evidence="1">
        <text>UDP-N-acetyl-alpha-D-muramate + NADP(+) = UDP-N-acetyl-3-O-(1-carboxyvinyl)-alpha-D-glucosamine + NADPH + H(+)</text>
        <dbReference type="Rhea" id="RHEA:12248"/>
        <dbReference type="ChEBI" id="CHEBI:15378"/>
        <dbReference type="ChEBI" id="CHEBI:57783"/>
        <dbReference type="ChEBI" id="CHEBI:58349"/>
        <dbReference type="ChEBI" id="CHEBI:68483"/>
        <dbReference type="ChEBI" id="CHEBI:70757"/>
        <dbReference type="EC" id="1.3.1.98"/>
    </reaction>
</comment>
<comment type="cofactor">
    <cofactor evidence="1">
        <name>FAD</name>
        <dbReference type="ChEBI" id="CHEBI:57692"/>
    </cofactor>
</comment>
<comment type="pathway">
    <text evidence="1">Cell wall biogenesis; peptidoglycan biosynthesis.</text>
</comment>
<comment type="subcellular location">
    <subcellularLocation>
        <location evidence="1">Cytoplasm</location>
    </subcellularLocation>
</comment>
<comment type="similarity">
    <text evidence="1">Belongs to the MurB family.</text>
</comment>
<evidence type="ECO:0000255" key="1">
    <source>
        <dbReference type="HAMAP-Rule" id="MF_00037"/>
    </source>
</evidence>
<accession>A5GPX0</accession>
<keyword id="KW-0131">Cell cycle</keyword>
<keyword id="KW-0132">Cell division</keyword>
<keyword id="KW-0133">Cell shape</keyword>
<keyword id="KW-0961">Cell wall biogenesis/degradation</keyword>
<keyword id="KW-0963">Cytoplasm</keyword>
<keyword id="KW-0274">FAD</keyword>
<keyword id="KW-0285">Flavoprotein</keyword>
<keyword id="KW-0521">NADP</keyword>
<keyword id="KW-0560">Oxidoreductase</keyword>
<keyword id="KW-0573">Peptidoglycan synthesis</keyword>
<keyword id="KW-1185">Reference proteome</keyword>
<feature type="chain" id="PRO_0000332513" description="UDP-N-acetylenolpyruvoylglucosamine reductase">
    <location>
        <begin position="1"/>
        <end position="305"/>
    </location>
</feature>
<feature type="domain" description="FAD-binding PCMH-type" evidence="1">
    <location>
        <begin position="22"/>
        <end position="190"/>
    </location>
</feature>
<feature type="active site" evidence="1">
    <location>
        <position position="169"/>
    </location>
</feature>
<feature type="active site" description="Proton donor" evidence="1">
    <location>
        <position position="220"/>
    </location>
</feature>
<feature type="active site" evidence="1">
    <location>
        <position position="290"/>
    </location>
</feature>